<keyword id="KW-0067">ATP-binding</keyword>
<keyword id="KW-0460">Magnesium</keyword>
<keyword id="KW-0547">Nucleotide-binding</keyword>
<keyword id="KW-1185">Reference proteome</keyword>
<keyword id="KW-0808">Transferase</keyword>
<keyword id="KW-0819">tRNA processing</keyword>
<proteinExistence type="inferred from homology"/>
<evidence type="ECO:0000255" key="1">
    <source>
        <dbReference type="HAMAP-Rule" id="MF_00185"/>
    </source>
</evidence>
<name>MIAA_MYXXD</name>
<organism>
    <name type="scientific">Myxococcus xanthus (strain DK1622)</name>
    <dbReference type="NCBI Taxonomy" id="246197"/>
    <lineage>
        <taxon>Bacteria</taxon>
        <taxon>Pseudomonadati</taxon>
        <taxon>Myxococcota</taxon>
        <taxon>Myxococcia</taxon>
        <taxon>Myxococcales</taxon>
        <taxon>Cystobacterineae</taxon>
        <taxon>Myxococcaceae</taxon>
        <taxon>Myxococcus</taxon>
    </lineage>
</organism>
<comment type="function">
    <text evidence="1">Catalyzes the transfer of a dimethylallyl group onto the adenine at position 37 in tRNAs that read codons beginning with uridine, leading to the formation of N6-(dimethylallyl)adenosine (i(6)A).</text>
</comment>
<comment type="catalytic activity">
    <reaction evidence="1">
        <text>adenosine(37) in tRNA + dimethylallyl diphosphate = N(6)-dimethylallyladenosine(37) in tRNA + diphosphate</text>
        <dbReference type="Rhea" id="RHEA:26482"/>
        <dbReference type="Rhea" id="RHEA-COMP:10162"/>
        <dbReference type="Rhea" id="RHEA-COMP:10375"/>
        <dbReference type="ChEBI" id="CHEBI:33019"/>
        <dbReference type="ChEBI" id="CHEBI:57623"/>
        <dbReference type="ChEBI" id="CHEBI:74411"/>
        <dbReference type="ChEBI" id="CHEBI:74415"/>
        <dbReference type="EC" id="2.5.1.75"/>
    </reaction>
</comment>
<comment type="cofactor">
    <cofactor evidence="1">
        <name>Mg(2+)</name>
        <dbReference type="ChEBI" id="CHEBI:18420"/>
    </cofactor>
</comment>
<comment type="subunit">
    <text evidence="1">Monomer.</text>
</comment>
<comment type="similarity">
    <text evidence="1">Belongs to the IPP transferase family.</text>
</comment>
<accession>Q1D607</accession>
<dbReference type="EC" id="2.5.1.75" evidence="1"/>
<dbReference type="EMBL" id="CP000113">
    <property type="protein sequence ID" value="ABF90644.1"/>
    <property type="molecule type" value="Genomic_DNA"/>
</dbReference>
<dbReference type="RefSeq" id="WP_011553747.1">
    <property type="nucleotide sequence ID" value="NC_008095.1"/>
</dbReference>
<dbReference type="SMR" id="Q1D607"/>
<dbReference type="STRING" id="246197.MXAN_3731"/>
<dbReference type="EnsemblBacteria" id="ABF90644">
    <property type="protein sequence ID" value="ABF90644"/>
    <property type="gene ID" value="MXAN_3731"/>
</dbReference>
<dbReference type="GeneID" id="41361064"/>
<dbReference type="KEGG" id="mxa:MXAN_3731"/>
<dbReference type="eggNOG" id="COG0324">
    <property type="taxonomic scope" value="Bacteria"/>
</dbReference>
<dbReference type="HOGENOM" id="CLU_032616_0_1_7"/>
<dbReference type="OrthoDB" id="9776390at2"/>
<dbReference type="Proteomes" id="UP000002402">
    <property type="component" value="Chromosome"/>
</dbReference>
<dbReference type="GO" id="GO:0005524">
    <property type="term" value="F:ATP binding"/>
    <property type="evidence" value="ECO:0007669"/>
    <property type="project" value="UniProtKB-UniRule"/>
</dbReference>
<dbReference type="GO" id="GO:0052381">
    <property type="term" value="F:tRNA dimethylallyltransferase activity"/>
    <property type="evidence" value="ECO:0007669"/>
    <property type="project" value="UniProtKB-UniRule"/>
</dbReference>
<dbReference type="GO" id="GO:0006400">
    <property type="term" value="P:tRNA modification"/>
    <property type="evidence" value="ECO:0007669"/>
    <property type="project" value="TreeGrafter"/>
</dbReference>
<dbReference type="Gene3D" id="1.10.20.140">
    <property type="match status" value="1"/>
</dbReference>
<dbReference type="Gene3D" id="3.40.50.300">
    <property type="entry name" value="P-loop containing nucleotide triphosphate hydrolases"/>
    <property type="match status" value="1"/>
</dbReference>
<dbReference type="HAMAP" id="MF_00185">
    <property type="entry name" value="IPP_trans"/>
    <property type="match status" value="1"/>
</dbReference>
<dbReference type="InterPro" id="IPR039657">
    <property type="entry name" value="Dimethylallyltransferase"/>
</dbReference>
<dbReference type="InterPro" id="IPR018022">
    <property type="entry name" value="IPT"/>
</dbReference>
<dbReference type="InterPro" id="IPR027417">
    <property type="entry name" value="P-loop_NTPase"/>
</dbReference>
<dbReference type="NCBIfam" id="TIGR00174">
    <property type="entry name" value="miaA"/>
    <property type="match status" value="1"/>
</dbReference>
<dbReference type="PANTHER" id="PTHR11088">
    <property type="entry name" value="TRNA DIMETHYLALLYLTRANSFERASE"/>
    <property type="match status" value="1"/>
</dbReference>
<dbReference type="PANTHER" id="PTHR11088:SF60">
    <property type="entry name" value="TRNA DIMETHYLALLYLTRANSFERASE"/>
    <property type="match status" value="1"/>
</dbReference>
<dbReference type="Pfam" id="PF01715">
    <property type="entry name" value="IPPT"/>
    <property type="match status" value="1"/>
</dbReference>
<dbReference type="SUPFAM" id="SSF52540">
    <property type="entry name" value="P-loop containing nucleoside triphosphate hydrolases"/>
    <property type="match status" value="2"/>
</dbReference>
<reference key="1">
    <citation type="journal article" date="2006" name="Proc. Natl. Acad. Sci. U.S.A.">
        <title>Evolution of sensory complexity recorded in a myxobacterial genome.</title>
        <authorList>
            <person name="Goldman B.S."/>
            <person name="Nierman W.C."/>
            <person name="Kaiser D."/>
            <person name="Slater S.C."/>
            <person name="Durkin A.S."/>
            <person name="Eisen J.A."/>
            <person name="Ronning C.M."/>
            <person name="Barbazuk W.B."/>
            <person name="Blanchard M."/>
            <person name="Field C."/>
            <person name="Halling C."/>
            <person name="Hinkle G."/>
            <person name="Iartchuk O."/>
            <person name="Kim H.S."/>
            <person name="Mackenzie C."/>
            <person name="Madupu R."/>
            <person name="Miller N."/>
            <person name="Shvartsbeyn A."/>
            <person name="Sullivan S.A."/>
            <person name="Vaudin M."/>
            <person name="Wiegand R."/>
            <person name="Kaplan H.B."/>
        </authorList>
    </citation>
    <scope>NUCLEOTIDE SEQUENCE [LARGE SCALE GENOMIC DNA]</scope>
    <source>
        <strain>DK1622</strain>
    </source>
</reference>
<feature type="chain" id="PRO_1000020623" description="tRNA dimethylallyltransferase">
    <location>
        <begin position="1"/>
        <end position="308"/>
    </location>
</feature>
<feature type="region of interest" description="Interaction with substrate tRNA" evidence="1">
    <location>
        <begin position="41"/>
        <end position="44"/>
    </location>
</feature>
<feature type="binding site" evidence="1">
    <location>
        <begin position="16"/>
        <end position="23"/>
    </location>
    <ligand>
        <name>ATP</name>
        <dbReference type="ChEBI" id="CHEBI:30616"/>
    </ligand>
</feature>
<feature type="binding site" evidence="1">
    <location>
        <begin position="18"/>
        <end position="23"/>
    </location>
    <ligand>
        <name>substrate</name>
    </ligand>
</feature>
<feature type="site" description="Interaction with substrate tRNA" evidence="1">
    <location>
        <position position="107"/>
    </location>
</feature>
<feature type="site" description="Interaction with substrate tRNA" evidence="1">
    <location>
        <position position="129"/>
    </location>
</feature>
<gene>
    <name evidence="1" type="primary">miaA</name>
    <name type="ordered locus">MXAN_3731</name>
</gene>
<sequence length="308" mass="33329">MGEGGAQRPLLTVIAGPTASGKTALAIALAQRAGGEIVSADSQQVYRHFDIGTAKPSSEELAAVPHHLVSAVDPMEAFSAVEYQRRADAVIAEIAARGRPVFVVGGTGLYLRVLLHGVLEAPGALPELRAELEALAAGEGREAVHRRLAEVDPETAAKLPPQDLVRVIRALEIHAQTGVPASAFRKAHAFAPDRYPFQLYVLSPPRDVLYGLINTRTRMLFERGLVEETRELLARGYADSAPMRSVGYVQARAVVEGRMTREEAIHDTAQETRRYAKRQLTWFRKEPGAVFLAPPYEAALPLGGCCSP</sequence>
<protein>
    <recommendedName>
        <fullName evidence="1">tRNA dimethylallyltransferase</fullName>
        <ecNumber evidence="1">2.5.1.75</ecNumber>
    </recommendedName>
    <alternativeName>
        <fullName evidence="1">Dimethylallyl diphosphate:tRNA dimethylallyltransferase</fullName>
        <shortName evidence="1">DMAPP:tRNA dimethylallyltransferase</shortName>
        <shortName evidence="1">DMATase</shortName>
    </alternativeName>
    <alternativeName>
        <fullName evidence="1">Isopentenyl-diphosphate:tRNA isopentenyltransferase</fullName>
        <shortName evidence="1">IPP transferase</shortName>
        <shortName evidence="1">IPPT</shortName>
        <shortName evidence="1">IPTase</shortName>
    </alternativeName>
</protein>